<evidence type="ECO:0000250" key="1"/>
<evidence type="ECO:0000255" key="2">
    <source>
        <dbReference type="PROSITE-ProRule" id="PRU00156"/>
    </source>
</evidence>
<evidence type="ECO:0000256" key="3">
    <source>
        <dbReference type="SAM" id="MobiDB-lite"/>
    </source>
</evidence>
<evidence type="ECO:0000305" key="4"/>
<feature type="chain" id="PRO_0000064181" description="Peptidyl-prolyl isomerase cwc27">
    <location>
        <begin position="1"/>
        <end position="559"/>
    </location>
</feature>
<feature type="domain" description="PPIase cyclophilin-type" evidence="2">
    <location>
        <begin position="11"/>
        <end position="184"/>
    </location>
</feature>
<feature type="region of interest" description="Disordered" evidence="3">
    <location>
        <begin position="201"/>
        <end position="395"/>
    </location>
</feature>
<feature type="region of interest" description="Disordered" evidence="3">
    <location>
        <begin position="413"/>
        <end position="449"/>
    </location>
</feature>
<feature type="region of interest" description="Disordered" evidence="3">
    <location>
        <begin position="518"/>
        <end position="559"/>
    </location>
</feature>
<feature type="compositionally biased region" description="Basic and acidic residues" evidence="3">
    <location>
        <begin position="261"/>
        <end position="273"/>
    </location>
</feature>
<feature type="compositionally biased region" description="Pro residues" evidence="3">
    <location>
        <begin position="305"/>
        <end position="319"/>
    </location>
</feature>
<feature type="compositionally biased region" description="Polar residues" evidence="3">
    <location>
        <begin position="384"/>
        <end position="394"/>
    </location>
</feature>
<feature type="compositionally biased region" description="Polar residues" evidence="3">
    <location>
        <begin position="425"/>
        <end position="442"/>
    </location>
</feature>
<organism>
    <name type="scientific">Aspergillus fumigatus (strain ATCC MYA-4609 / CBS 101355 / FGSC A1100 / Af293)</name>
    <name type="common">Neosartorya fumigata</name>
    <dbReference type="NCBI Taxonomy" id="330879"/>
    <lineage>
        <taxon>Eukaryota</taxon>
        <taxon>Fungi</taxon>
        <taxon>Dikarya</taxon>
        <taxon>Ascomycota</taxon>
        <taxon>Pezizomycotina</taxon>
        <taxon>Eurotiomycetes</taxon>
        <taxon>Eurotiomycetidae</taxon>
        <taxon>Eurotiales</taxon>
        <taxon>Aspergillaceae</taxon>
        <taxon>Aspergillus</taxon>
        <taxon>Aspergillus subgen. Fumigati</taxon>
    </lineage>
</organism>
<name>CWC27_ASPFU</name>
<reference key="1">
    <citation type="journal article" date="2005" name="Nature">
        <title>Genomic sequence of the pathogenic and allergenic filamentous fungus Aspergillus fumigatus.</title>
        <authorList>
            <person name="Nierman W.C."/>
            <person name="Pain A."/>
            <person name="Anderson M.J."/>
            <person name="Wortman J.R."/>
            <person name="Kim H.S."/>
            <person name="Arroyo J."/>
            <person name="Berriman M."/>
            <person name="Abe K."/>
            <person name="Archer D.B."/>
            <person name="Bermejo C."/>
            <person name="Bennett J.W."/>
            <person name="Bowyer P."/>
            <person name="Chen D."/>
            <person name="Collins M."/>
            <person name="Coulsen R."/>
            <person name="Davies R."/>
            <person name="Dyer P.S."/>
            <person name="Farman M.L."/>
            <person name="Fedorova N."/>
            <person name="Fedorova N.D."/>
            <person name="Feldblyum T.V."/>
            <person name="Fischer R."/>
            <person name="Fosker N."/>
            <person name="Fraser A."/>
            <person name="Garcia J.L."/>
            <person name="Garcia M.J."/>
            <person name="Goble A."/>
            <person name="Goldman G.H."/>
            <person name="Gomi K."/>
            <person name="Griffith-Jones S."/>
            <person name="Gwilliam R."/>
            <person name="Haas B.J."/>
            <person name="Haas H."/>
            <person name="Harris D.E."/>
            <person name="Horiuchi H."/>
            <person name="Huang J."/>
            <person name="Humphray S."/>
            <person name="Jimenez J."/>
            <person name="Keller N."/>
            <person name="Khouri H."/>
            <person name="Kitamoto K."/>
            <person name="Kobayashi T."/>
            <person name="Konzack S."/>
            <person name="Kulkarni R."/>
            <person name="Kumagai T."/>
            <person name="Lafton A."/>
            <person name="Latge J.-P."/>
            <person name="Li W."/>
            <person name="Lord A."/>
            <person name="Lu C."/>
            <person name="Majoros W.H."/>
            <person name="May G.S."/>
            <person name="Miller B.L."/>
            <person name="Mohamoud Y."/>
            <person name="Molina M."/>
            <person name="Monod M."/>
            <person name="Mouyna I."/>
            <person name="Mulligan S."/>
            <person name="Murphy L.D."/>
            <person name="O'Neil S."/>
            <person name="Paulsen I."/>
            <person name="Penalva M.A."/>
            <person name="Pertea M."/>
            <person name="Price C."/>
            <person name="Pritchard B.L."/>
            <person name="Quail M.A."/>
            <person name="Rabbinowitsch E."/>
            <person name="Rawlins N."/>
            <person name="Rajandream M.A."/>
            <person name="Reichard U."/>
            <person name="Renauld H."/>
            <person name="Robson G.D."/>
            <person name="Rodriguez de Cordoba S."/>
            <person name="Rodriguez-Pena J.M."/>
            <person name="Ronning C.M."/>
            <person name="Rutter S."/>
            <person name="Salzberg S.L."/>
            <person name="Sanchez M."/>
            <person name="Sanchez-Ferrero J.C."/>
            <person name="Saunders D."/>
            <person name="Seeger K."/>
            <person name="Squares R."/>
            <person name="Squares S."/>
            <person name="Takeuchi M."/>
            <person name="Tekaia F."/>
            <person name="Turner G."/>
            <person name="Vazquez de Aldana C.R."/>
            <person name="Weidman J."/>
            <person name="White O."/>
            <person name="Woodward J.R."/>
            <person name="Yu J.-H."/>
            <person name="Fraser C.M."/>
            <person name="Galagan J.E."/>
            <person name="Asai K."/>
            <person name="Machida M."/>
            <person name="Hall N."/>
            <person name="Barrell B.G."/>
            <person name="Denning D.W."/>
        </authorList>
    </citation>
    <scope>NUCLEOTIDE SEQUENCE [LARGE SCALE GENOMIC DNA]</scope>
    <source>
        <strain>ATCC MYA-4609 / CBS 101355 / FGSC A1100 / Af293</strain>
    </source>
</reference>
<dbReference type="EC" id="5.2.1.8"/>
<dbReference type="EMBL" id="AAHF01000011">
    <property type="protein sequence ID" value="EAL86115.1"/>
    <property type="molecule type" value="Genomic_DNA"/>
</dbReference>
<dbReference type="RefSeq" id="XP_748153.1">
    <property type="nucleotide sequence ID" value="XM_743060.1"/>
</dbReference>
<dbReference type="SMR" id="Q4WE62"/>
<dbReference type="STRING" id="330879.Q4WE62"/>
<dbReference type="EnsemblFungi" id="EAL86115">
    <property type="protein sequence ID" value="EAL86115"/>
    <property type="gene ID" value="AFUA_5G01890"/>
</dbReference>
<dbReference type="GeneID" id="3505738"/>
<dbReference type="KEGG" id="afm:AFUA_5G01890"/>
<dbReference type="VEuPathDB" id="FungiDB:Afu5g01890"/>
<dbReference type="eggNOG" id="KOG0885">
    <property type="taxonomic scope" value="Eukaryota"/>
</dbReference>
<dbReference type="HOGENOM" id="CLU_012062_14_5_1"/>
<dbReference type="InParanoid" id="Q4WE62"/>
<dbReference type="OMA" id="CKNFLQH"/>
<dbReference type="OrthoDB" id="442970at2759"/>
<dbReference type="Proteomes" id="UP000002530">
    <property type="component" value="Chromosome 5"/>
</dbReference>
<dbReference type="GO" id="GO:0071013">
    <property type="term" value="C:catalytic step 2 spliceosome"/>
    <property type="evidence" value="ECO:0000318"/>
    <property type="project" value="GO_Central"/>
</dbReference>
<dbReference type="GO" id="GO:0005737">
    <property type="term" value="C:cytoplasm"/>
    <property type="evidence" value="ECO:0007669"/>
    <property type="project" value="UniProtKB-SubCell"/>
</dbReference>
<dbReference type="GO" id="GO:0003755">
    <property type="term" value="F:peptidyl-prolyl cis-trans isomerase activity"/>
    <property type="evidence" value="ECO:0007669"/>
    <property type="project" value="UniProtKB-KW"/>
</dbReference>
<dbReference type="GO" id="GO:0006397">
    <property type="term" value="P:mRNA processing"/>
    <property type="evidence" value="ECO:0007669"/>
    <property type="project" value="UniProtKB-KW"/>
</dbReference>
<dbReference type="GO" id="GO:0006457">
    <property type="term" value="P:protein folding"/>
    <property type="evidence" value="ECO:0000318"/>
    <property type="project" value="GO_Central"/>
</dbReference>
<dbReference type="GO" id="GO:0008380">
    <property type="term" value="P:RNA splicing"/>
    <property type="evidence" value="ECO:0007669"/>
    <property type="project" value="UniProtKB-KW"/>
</dbReference>
<dbReference type="FunFam" id="2.40.100.10:FF:000034">
    <property type="entry name" value="Peptidyl-prolyl isomerase CWC27 protein"/>
    <property type="match status" value="1"/>
</dbReference>
<dbReference type="Gene3D" id="2.40.100.10">
    <property type="entry name" value="Cyclophilin-like"/>
    <property type="match status" value="1"/>
</dbReference>
<dbReference type="InterPro" id="IPR029000">
    <property type="entry name" value="Cyclophilin-like_dom_sf"/>
</dbReference>
<dbReference type="InterPro" id="IPR020892">
    <property type="entry name" value="Cyclophilin-type_PPIase_CS"/>
</dbReference>
<dbReference type="InterPro" id="IPR002130">
    <property type="entry name" value="Cyclophilin-type_PPIase_dom"/>
</dbReference>
<dbReference type="InterPro" id="IPR044666">
    <property type="entry name" value="Cyclophilin_A-like"/>
</dbReference>
<dbReference type="PANTHER" id="PTHR45625">
    <property type="entry name" value="PEPTIDYL-PROLYL CIS-TRANS ISOMERASE-RELATED"/>
    <property type="match status" value="1"/>
</dbReference>
<dbReference type="PANTHER" id="PTHR45625:SF6">
    <property type="entry name" value="SPLICEOSOME-ASSOCIATED PROTEIN CWC27 HOMOLOG"/>
    <property type="match status" value="1"/>
</dbReference>
<dbReference type="Pfam" id="PF00160">
    <property type="entry name" value="Pro_isomerase"/>
    <property type="match status" value="1"/>
</dbReference>
<dbReference type="PRINTS" id="PR00153">
    <property type="entry name" value="CSAPPISMRASE"/>
</dbReference>
<dbReference type="SUPFAM" id="SSF50891">
    <property type="entry name" value="Cyclophilin-like"/>
    <property type="match status" value="1"/>
</dbReference>
<dbReference type="PROSITE" id="PS00170">
    <property type="entry name" value="CSA_PPIASE_1"/>
    <property type="match status" value="1"/>
</dbReference>
<dbReference type="PROSITE" id="PS50072">
    <property type="entry name" value="CSA_PPIASE_2"/>
    <property type="match status" value="1"/>
</dbReference>
<proteinExistence type="inferred from homology"/>
<accession>Q4WE62</accession>
<gene>
    <name type="primary">cwc27</name>
    <name type="ORF">AFUA_5G01890</name>
</gene>
<sequence length="559" mass="62004">MSAHYTTEPPPTASATLHTTFGPIHIALFANQTPLTCKNFLQHCLDNYYAGTIFHRIVPDFIVQGGDPTGTGSGGTSIYEYPEFEYDPEARDPNEKVVLRDELHSRLRFNRRGLVGMAKSEDGTYGSQFFITLANAERELNGQCTLFGRVEGDSIYNVLKIAEAERVERTERPVYPVKVVSCEVGELGPFAGKLKRRETIATAPAAEEKPAAKKKKKAKGGKTLLSFGGDEGDEDVPLRPSKPKFNPTLVVDAGIPPANDAPKKTSPEAEQQTRKRPRSPSPRRSLSAERKHRPKTPDPLTQLPLPDPESPARSPPQSPPARQSILSRTRAEIENLKASMRRTVATGPADTGRKKSALEAMIPETAIRGRKRPPPGTVNGAGRGSSTNGVTGFSSAAEDETLRMFNAFKAKLESADAKSGPHGKTSISASDTTKYTSQAKSNTEPEDEEAQLCDLHFIANCQSCKSWDDTGTAEEAPDDDDRDWLTHELRFGKDMLGKDLQWKREHPDDVDSLVVIDPREREKEFVGGKRRGLERDRERDRKRERVGDQEWDRRRREKP</sequence>
<protein>
    <recommendedName>
        <fullName>Peptidyl-prolyl isomerase cwc27</fullName>
        <shortName>PPIase cwc27</shortName>
        <ecNumber>5.2.1.8</ecNumber>
    </recommendedName>
    <alternativeName>
        <fullName>Rotamase cwc27</fullName>
    </alternativeName>
</protein>
<comment type="function">
    <text evidence="1">PPIases accelerate the folding of proteins. It catalyzes the cis-trans isomerization of proline imidic peptide bonds in oligopeptides. Involved in pre-mRNA splicing (By similarity).</text>
</comment>
<comment type="catalytic activity">
    <reaction>
        <text>[protein]-peptidylproline (omega=180) = [protein]-peptidylproline (omega=0)</text>
        <dbReference type="Rhea" id="RHEA:16237"/>
        <dbReference type="Rhea" id="RHEA-COMP:10747"/>
        <dbReference type="Rhea" id="RHEA-COMP:10748"/>
        <dbReference type="ChEBI" id="CHEBI:83833"/>
        <dbReference type="ChEBI" id="CHEBI:83834"/>
        <dbReference type="EC" id="5.2.1.8"/>
    </reaction>
</comment>
<comment type="subunit">
    <text evidence="1">Associated with the spliceosome.</text>
</comment>
<comment type="subcellular location">
    <subcellularLocation>
        <location evidence="1">Cytoplasm</location>
    </subcellularLocation>
    <subcellularLocation>
        <location evidence="1">Nucleus</location>
    </subcellularLocation>
</comment>
<comment type="similarity">
    <text evidence="4">Belongs to the cyclophilin-type PPIase family. CWC27 subfamily.</text>
</comment>
<keyword id="KW-0963">Cytoplasm</keyword>
<keyword id="KW-0413">Isomerase</keyword>
<keyword id="KW-0507">mRNA processing</keyword>
<keyword id="KW-0508">mRNA splicing</keyword>
<keyword id="KW-0539">Nucleus</keyword>
<keyword id="KW-1185">Reference proteome</keyword>
<keyword id="KW-0697">Rotamase</keyword>
<keyword id="KW-0747">Spliceosome</keyword>